<gene>
    <name evidence="1" type="primary">rplB</name>
    <name type="ordered locus">LPC_3010</name>
</gene>
<protein>
    <recommendedName>
        <fullName evidence="1">Large ribosomal subunit protein uL2</fullName>
    </recommendedName>
    <alternativeName>
        <fullName evidence="3">50S ribosomal protein L2</fullName>
    </alternativeName>
</protein>
<reference key="1">
    <citation type="submission" date="2006-11" db="EMBL/GenBank/DDBJ databases">
        <title>Identification and characterization of a new conjugation/ type IVA secretion system (trb/tra) of L. pneumophila Corby localized on a mobile genomic island.</title>
        <authorList>
            <person name="Gloeckner G."/>
            <person name="Albert-Weissenberger C."/>
            <person name="Weinmann E."/>
            <person name="Jacobi S."/>
            <person name="Schunder E."/>
            <person name="Steinert M."/>
            <person name="Buchrieser C."/>
            <person name="Hacker J."/>
            <person name="Heuner K."/>
        </authorList>
    </citation>
    <scope>NUCLEOTIDE SEQUENCE [LARGE SCALE GENOMIC DNA]</scope>
    <source>
        <strain>Corby</strain>
    </source>
</reference>
<dbReference type="EMBL" id="CP000675">
    <property type="protein sequence ID" value="ABQ56911.1"/>
    <property type="molecule type" value="Genomic_DNA"/>
</dbReference>
<dbReference type="RefSeq" id="WP_010946081.1">
    <property type="nucleotide sequence ID" value="NC_009494.2"/>
</dbReference>
<dbReference type="SMR" id="A5IHR1"/>
<dbReference type="GeneID" id="57034335"/>
<dbReference type="KEGG" id="lpc:LPC_3010"/>
<dbReference type="HOGENOM" id="CLU_036235_2_1_6"/>
<dbReference type="GO" id="GO:0015934">
    <property type="term" value="C:large ribosomal subunit"/>
    <property type="evidence" value="ECO:0007669"/>
    <property type="project" value="InterPro"/>
</dbReference>
<dbReference type="GO" id="GO:0019843">
    <property type="term" value="F:rRNA binding"/>
    <property type="evidence" value="ECO:0007669"/>
    <property type="project" value="UniProtKB-UniRule"/>
</dbReference>
<dbReference type="GO" id="GO:0003735">
    <property type="term" value="F:structural constituent of ribosome"/>
    <property type="evidence" value="ECO:0007669"/>
    <property type="project" value="InterPro"/>
</dbReference>
<dbReference type="GO" id="GO:0016740">
    <property type="term" value="F:transferase activity"/>
    <property type="evidence" value="ECO:0007669"/>
    <property type="project" value="InterPro"/>
</dbReference>
<dbReference type="GO" id="GO:0002181">
    <property type="term" value="P:cytoplasmic translation"/>
    <property type="evidence" value="ECO:0007669"/>
    <property type="project" value="TreeGrafter"/>
</dbReference>
<dbReference type="FunFam" id="2.30.30.30:FF:000001">
    <property type="entry name" value="50S ribosomal protein L2"/>
    <property type="match status" value="1"/>
</dbReference>
<dbReference type="FunFam" id="2.40.50.140:FF:000003">
    <property type="entry name" value="50S ribosomal protein L2"/>
    <property type="match status" value="1"/>
</dbReference>
<dbReference type="FunFam" id="4.10.950.10:FF:000001">
    <property type="entry name" value="50S ribosomal protein L2"/>
    <property type="match status" value="1"/>
</dbReference>
<dbReference type="Gene3D" id="2.30.30.30">
    <property type="match status" value="1"/>
</dbReference>
<dbReference type="Gene3D" id="2.40.50.140">
    <property type="entry name" value="Nucleic acid-binding proteins"/>
    <property type="match status" value="1"/>
</dbReference>
<dbReference type="Gene3D" id="4.10.950.10">
    <property type="entry name" value="Ribosomal protein L2, domain 3"/>
    <property type="match status" value="1"/>
</dbReference>
<dbReference type="HAMAP" id="MF_01320_B">
    <property type="entry name" value="Ribosomal_uL2_B"/>
    <property type="match status" value="1"/>
</dbReference>
<dbReference type="InterPro" id="IPR012340">
    <property type="entry name" value="NA-bd_OB-fold"/>
</dbReference>
<dbReference type="InterPro" id="IPR014722">
    <property type="entry name" value="Rib_uL2_dom2"/>
</dbReference>
<dbReference type="InterPro" id="IPR002171">
    <property type="entry name" value="Ribosomal_uL2"/>
</dbReference>
<dbReference type="InterPro" id="IPR005880">
    <property type="entry name" value="Ribosomal_uL2_bac/org-type"/>
</dbReference>
<dbReference type="InterPro" id="IPR022669">
    <property type="entry name" value="Ribosomal_uL2_C"/>
</dbReference>
<dbReference type="InterPro" id="IPR022671">
    <property type="entry name" value="Ribosomal_uL2_CS"/>
</dbReference>
<dbReference type="InterPro" id="IPR014726">
    <property type="entry name" value="Ribosomal_uL2_dom3"/>
</dbReference>
<dbReference type="InterPro" id="IPR022666">
    <property type="entry name" value="Ribosomal_uL2_RNA-bd_dom"/>
</dbReference>
<dbReference type="InterPro" id="IPR008991">
    <property type="entry name" value="Translation_prot_SH3-like_sf"/>
</dbReference>
<dbReference type="NCBIfam" id="TIGR01171">
    <property type="entry name" value="rplB_bact"/>
    <property type="match status" value="1"/>
</dbReference>
<dbReference type="PANTHER" id="PTHR13691:SF5">
    <property type="entry name" value="LARGE RIBOSOMAL SUBUNIT PROTEIN UL2M"/>
    <property type="match status" value="1"/>
</dbReference>
<dbReference type="PANTHER" id="PTHR13691">
    <property type="entry name" value="RIBOSOMAL PROTEIN L2"/>
    <property type="match status" value="1"/>
</dbReference>
<dbReference type="Pfam" id="PF00181">
    <property type="entry name" value="Ribosomal_L2"/>
    <property type="match status" value="1"/>
</dbReference>
<dbReference type="Pfam" id="PF03947">
    <property type="entry name" value="Ribosomal_L2_C"/>
    <property type="match status" value="1"/>
</dbReference>
<dbReference type="PIRSF" id="PIRSF002158">
    <property type="entry name" value="Ribosomal_L2"/>
    <property type="match status" value="1"/>
</dbReference>
<dbReference type="SMART" id="SM01383">
    <property type="entry name" value="Ribosomal_L2"/>
    <property type="match status" value="1"/>
</dbReference>
<dbReference type="SMART" id="SM01382">
    <property type="entry name" value="Ribosomal_L2_C"/>
    <property type="match status" value="1"/>
</dbReference>
<dbReference type="SUPFAM" id="SSF50249">
    <property type="entry name" value="Nucleic acid-binding proteins"/>
    <property type="match status" value="1"/>
</dbReference>
<dbReference type="SUPFAM" id="SSF50104">
    <property type="entry name" value="Translation proteins SH3-like domain"/>
    <property type="match status" value="1"/>
</dbReference>
<dbReference type="PROSITE" id="PS00467">
    <property type="entry name" value="RIBOSOMAL_L2"/>
    <property type="match status" value="1"/>
</dbReference>
<organism>
    <name type="scientific">Legionella pneumophila (strain Corby)</name>
    <dbReference type="NCBI Taxonomy" id="400673"/>
    <lineage>
        <taxon>Bacteria</taxon>
        <taxon>Pseudomonadati</taxon>
        <taxon>Pseudomonadota</taxon>
        <taxon>Gammaproteobacteria</taxon>
        <taxon>Legionellales</taxon>
        <taxon>Legionellaceae</taxon>
        <taxon>Legionella</taxon>
    </lineage>
</organism>
<name>RL2_LEGPC</name>
<sequence>MALLKSKPTSPGKRGEIRVVHHDIYKGKPHAALVEKLKKTGGRNNQGRITVRHIGGGQRQKYRIIDFKRNKDGILGRVERLEYDPNRTALIALISYKDGEKRYIIAPSNLEVGATIQSGADSPISVGNCLPLKNIPVGTTIHCVEMKPGKGAQMLRSAGCSGQLVAKEGVYATLRLRSGEMRKIHVLCRAVIGEVSNSEHNLRALGKAGAKRWRGIRPTVRGVAMNPVDHPHGGGEGRTSGGRHPVSPWGLPTKGYKTRSNKRTDTFIVRGRKKK</sequence>
<accession>A5IHR1</accession>
<comment type="function">
    <text evidence="1">One of the primary rRNA binding proteins. Required for association of the 30S and 50S subunits to form the 70S ribosome, for tRNA binding and peptide bond formation. It has been suggested to have peptidyltransferase activity; this is somewhat controversial. Makes several contacts with the 16S rRNA in the 70S ribosome.</text>
</comment>
<comment type="subunit">
    <text evidence="1">Part of the 50S ribosomal subunit. Forms a bridge to the 30S subunit in the 70S ribosome.</text>
</comment>
<comment type="similarity">
    <text evidence="1">Belongs to the universal ribosomal protein uL2 family.</text>
</comment>
<evidence type="ECO:0000255" key="1">
    <source>
        <dbReference type="HAMAP-Rule" id="MF_01320"/>
    </source>
</evidence>
<evidence type="ECO:0000256" key="2">
    <source>
        <dbReference type="SAM" id="MobiDB-lite"/>
    </source>
</evidence>
<evidence type="ECO:0000305" key="3"/>
<proteinExistence type="inferred from homology"/>
<keyword id="KW-0687">Ribonucleoprotein</keyword>
<keyword id="KW-0689">Ribosomal protein</keyword>
<keyword id="KW-0694">RNA-binding</keyword>
<keyword id="KW-0699">rRNA-binding</keyword>
<feature type="chain" id="PRO_0000309945" description="Large ribosomal subunit protein uL2">
    <location>
        <begin position="1"/>
        <end position="275"/>
    </location>
</feature>
<feature type="region of interest" description="Disordered" evidence="2">
    <location>
        <begin position="223"/>
        <end position="260"/>
    </location>
</feature>